<organism>
    <name type="scientific">Culex quinquefasciatus</name>
    <name type="common">Southern house mosquito</name>
    <name type="synonym">Culex pungens</name>
    <dbReference type="NCBI Taxonomy" id="7176"/>
    <lineage>
        <taxon>Eukaryota</taxon>
        <taxon>Metazoa</taxon>
        <taxon>Ecdysozoa</taxon>
        <taxon>Arthropoda</taxon>
        <taxon>Hexapoda</taxon>
        <taxon>Insecta</taxon>
        <taxon>Pterygota</taxon>
        <taxon>Neoptera</taxon>
        <taxon>Endopterygota</taxon>
        <taxon>Diptera</taxon>
        <taxon>Nematocera</taxon>
        <taxon>Culicoidea</taxon>
        <taxon>Culicidae</taxon>
        <taxon>Culicinae</taxon>
        <taxon>Culicini</taxon>
        <taxon>Culex</taxon>
        <taxon>Culex</taxon>
    </lineage>
</organism>
<name>DAN_CULQU</name>
<comment type="function">
    <text evidence="1">Probable transcription factor with a role in the retinal determination (RD) network. Contributes to differentiation of antenna-specific characteristics (By similarity).</text>
</comment>
<comment type="subunit">
    <text evidence="1">Homomers. Interacts with itself, danr, ey and dac to form a complex (or complexes) containing the RD factors (By similarity).</text>
</comment>
<comment type="subcellular location">
    <subcellularLocation>
        <location evidence="1 2">Nucleus</location>
    </subcellularLocation>
</comment>
<dbReference type="EMBL" id="DS232365">
    <property type="protein sequence ID" value="EDS40706.1"/>
    <property type="molecule type" value="Genomic_DNA"/>
</dbReference>
<dbReference type="RefSeq" id="XP_001864782.1">
    <property type="nucleotide sequence ID" value="XM_001864747.1"/>
</dbReference>
<dbReference type="SMR" id="B0X560"/>
<dbReference type="FunCoup" id="B0X560">
    <property type="interactions" value="109"/>
</dbReference>
<dbReference type="STRING" id="7176.B0X560"/>
<dbReference type="EnsemblMetazoa" id="CPIJ014460-RA">
    <property type="protein sequence ID" value="CPIJ014460-PA"/>
    <property type="gene ID" value="CPIJ014460"/>
</dbReference>
<dbReference type="KEGG" id="cqu:CpipJ_CPIJ014460"/>
<dbReference type="VEuPathDB" id="VectorBase:CPIJ014460"/>
<dbReference type="VEuPathDB" id="VectorBase:CQUJHB016679"/>
<dbReference type="eggNOG" id="ENOG502S5K1">
    <property type="taxonomic scope" value="Eukaryota"/>
</dbReference>
<dbReference type="HOGENOM" id="CLU_405596_0_0_1"/>
<dbReference type="InParanoid" id="B0X560"/>
<dbReference type="OMA" id="HMNIRMG"/>
<dbReference type="OrthoDB" id="6624814at2759"/>
<dbReference type="PhylomeDB" id="B0X560"/>
<dbReference type="Proteomes" id="UP000002320">
    <property type="component" value="Unassembled WGS sequence"/>
</dbReference>
<dbReference type="GO" id="GO:0005634">
    <property type="term" value="C:nucleus"/>
    <property type="evidence" value="ECO:0000250"/>
    <property type="project" value="UniProtKB"/>
</dbReference>
<dbReference type="GO" id="GO:0003677">
    <property type="term" value="F:DNA binding"/>
    <property type="evidence" value="ECO:0007669"/>
    <property type="project" value="UniProtKB-KW"/>
</dbReference>
<dbReference type="GO" id="GO:0003700">
    <property type="term" value="F:DNA-binding transcription factor activity"/>
    <property type="evidence" value="ECO:0000250"/>
    <property type="project" value="UniProtKB"/>
</dbReference>
<dbReference type="GO" id="GO:0007469">
    <property type="term" value="P:antennal development"/>
    <property type="evidence" value="ECO:0000250"/>
    <property type="project" value="UniProtKB"/>
</dbReference>
<dbReference type="GO" id="GO:0048749">
    <property type="term" value="P:compound eye development"/>
    <property type="evidence" value="ECO:0000250"/>
    <property type="project" value="UniProtKB"/>
</dbReference>
<dbReference type="GO" id="GO:0006355">
    <property type="term" value="P:regulation of DNA-templated transcription"/>
    <property type="evidence" value="ECO:0000250"/>
    <property type="project" value="UniProtKB"/>
</dbReference>
<dbReference type="GO" id="GO:0007379">
    <property type="term" value="P:segment specification"/>
    <property type="evidence" value="ECO:0000250"/>
    <property type="project" value="UniProtKB"/>
</dbReference>
<dbReference type="FunFam" id="1.10.10.10:FF:000293">
    <property type="entry name" value="Tigger transposable element-derived protein 5"/>
    <property type="match status" value="1"/>
</dbReference>
<dbReference type="Gene3D" id="1.10.10.10">
    <property type="entry name" value="Winged helix-like DNA-binding domain superfamily/Winged helix DNA-binding domain"/>
    <property type="match status" value="1"/>
</dbReference>
<dbReference type="InterPro" id="IPR009057">
    <property type="entry name" value="Homeodomain-like_sf"/>
</dbReference>
<dbReference type="InterPro" id="IPR007889">
    <property type="entry name" value="HTH_Psq"/>
</dbReference>
<dbReference type="InterPro" id="IPR051839">
    <property type="entry name" value="RD_transcriptional_regulator"/>
</dbReference>
<dbReference type="InterPro" id="IPR036388">
    <property type="entry name" value="WH-like_DNA-bd_sf"/>
</dbReference>
<dbReference type="PANTHER" id="PTHR33215">
    <property type="entry name" value="PROTEIN DISTAL ANTENNA"/>
    <property type="match status" value="1"/>
</dbReference>
<dbReference type="PANTHER" id="PTHR33215:SF13">
    <property type="entry name" value="PROTEIN DISTAL ANTENNA"/>
    <property type="match status" value="1"/>
</dbReference>
<dbReference type="Pfam" id="PF04218">
    <property type="entry name" value="CENP-B_N"/>
    <property type="match status" value="1"/>
</dbReference>
<dbReference type="SUPFAM" id="SSF46689">
    <property type="entry name" value="Homeodomain-like"/>
    <property type="match status" value="1"/>
</dbReference>
<dbReference type="PROSITE" id="PS50960">
    <property type="entry name" value="HTH_PSQ"/>
    <property type="match status" value="1"/>
</dbReference>
<keyword id="KW-0217">Developmental protein</keyword>
<keyword id="KW-0238">DNA-binding</keyword>
<keyword id="KW-0539">Nucleus</keyword>
<keyword id="KW-0597">Phosphoprotein</keyword>
<keyword id="KW-1185">Reference proteome</keyword>
<keyword id="KW-0804">Transcription</keyword>
<keyword id="KW-0805">Transcription regulation</keyword>
<proteinExistence type="inferred from homology"/>
<gene>
    <name evidence="1" type="primary">dan</name>
    <name type="ORF">CPIJ014460</name>
</gene>
<protein>
    <recommendedName>
        <fullName evidence="1">Protein distal antenna</fullName>
    </recommendedName>
</protein>
<evidence type="ECO:0000250" key="1">
    <source>
        <dbReference type="UniProtKB" id="Q29CW2"/>
    </source>
</evidence>
<evidence type="ECO:0000255" key="2">
    <source>
        <dbReference type="PROSITE-ProRule" id="PRU00320"/>
    </source>
</evidence>
<evidence type="ECO:0000256" key="3">
    <source>
        <dbReference type="SAM" id="MobiDB-lite"/>
    </source>
</evidence>
<evidence type="ECO:0000312" key="4">
    <source>
        <dbReference type="EMBL" id="EDS40706.1"/>
    </source>
</evidence>
<accession>B0X560</accession>
<reference evidence="4" key="1">
    <citation type="submission" date="2007-03" db="EMBL/GenBank/DDBJ databases">
        <title>Annotation of Culex pipiens quinquefasciatus.</title>
        <authorList>
            <consortium name="The Broad Institute Genome Sequencing Platform"/>
            <person name="Atkinson P.W."/>
            <person name="Hemingway J."/>
            <person name="Christensen B.M."/>
            <person name="Higgs S."/>
            <person name="Kodira C.D."/>
            <person name="Hannick L.I."/>
            <person name="Megy K."/>
            <person name="O'Leary S.B."/>
            <person name="Pearson M."/>
            <person name="Haas B.J."/>
            <person name="Mauceli E."/>
            <person name="Wortman J.R."/>
            <person name="Lee N.H."/>
            <person name="Guigo R."/>
            <person name="Stanke M."/>
            <person name="Alvarado L."/>
            <person name="Amedeo P."/>
            <person name="Antoine C.H."/>
            <person name="Arensburger P."/>
            <person name="Bidwell S.L."/>
            <person name="Crawford M."/>
            <person name="Camaro F."/>
            <person name="Devon K."/>
            <person name="Engels R."/>
            <person name="Hammond M."/>
            <person name="Howarth C."/>
            <person name="Koehrsen M."/>
            <person name="Lawson D."/>
            <person name="Montgomery P."/>
            <person name="Nene V."/>
            <person name="Nusbaum C."/>
            <person name="Puiu D."/>
            <person name="Romero-Severson J."/>
            <person name="Severson D.W."/>
            <person name="Shumway M."/>
            <person name="Sisk P."/>
            <person name="Stolte C."/>
            <person name="Zeng Q."/>
            <person name="Eisenstadt E."/>
            <person name="Fraser-Liggett C.M."/>
            <person name="Strausberg R."/>
            <person name="Galagan J."/>
            <person name="Birren B."/>
            <person name="Collins F.H."/>
        </authorList>
    </citation>
    <scope>NUCLEOTIDE SEQUENCE [LARGE SCALE GENOMIC DNA]</scope>
    <source>
        <strain evidence="4">JHB</strain>
    </source>
</reference>
<sequence length="662" mass="70822">MPMSSSGYSRTTTHFKMMMATKGKRPLRHLTATDKIDAIQRIHDGESKASVARDIGVPESTLRGWCKNEEKLRYMSRQSAENADKLTSEATAAALTAVAAAELFNGPPEKRMKLEQGLFGKKYDESFYKSPRGMNGLDLSGGGDKGLGVSGGDIIMNGLHGADFSAFAKTAAEISAMGKAKDRYGADLSRNGGGDPGKAELSMAAISPLTSLSHLSGMGGLAQSPLALSFNEIATNLNLIAQLNNNHNLATMSNLGGLTAAQSLRNARPKGNASQSPRASLPDSSGSGGGTPGDKSTPSLTVRNLAKLQQKTSSELQNNGRDPNAPVDEALWYWLKSQQAMLGLNNLYSQMPRPSSPQQPQSTPPTTTTTQQQQPQSSTPPTATPPIVSTPQPTPPSSAPSLTPEDTKNSSWFWQWYKTFGASLMPGDKSCNNNSINATNANNSKYENILYSQLTKGQSPPTTADSLNNNAQPINLNISSNGVVDHLKSEPEDLTTTTNPSMLPPEDHTRFNPSPSTSIKSELKPEVDEDEDEDDEVAKCNGANTAVKQVLDNLLYSQSSPGPVATAPSPLSPSSSTHENGHATPTPLADDLKSTCSEDTDLKSSAEAVEHGEKFLKWLEACSDPNVTAMQVMQFKYLLNSIKLSAERQNGGGEERTRRRRK</sequence>
<feature type="chain" id="PRO_0000351199" description="Protein distal antenna">
    <location>
        <begin position="1"/>
        <end position="662"/>
    </location>
</feature>
<feature type="domain" description="HTH psq-type" evidence="2">
    <location>
        <begin position="21"/>
        <end position="72"/>
    </location>
</feature>
<feature type="DNA-binding region" description="H-T-H motif" evidence="2">
    <location>
        <begin position="48"/>
        <end position="68"/>
    </location>
</feature>
<feature type="region of interest" description="Disordered" evidence="3">
    <location>
        <begin position="265"/>
        <end position="299"/>
    </location>
</feature>
<feature type="region of interest" description="Disordered" evidence="3">
    <location>
        <begin position="348"/>
        <end position="407"/>
    </location>
</feature>
<feature type="region of interest" description="Disordered" evidence="3">
    <location>
        <begin position="491"/>
        <end position="537"/>
    </location>
</feature>
<feature type="region of interest" description="Disordered" evidence="3">
    <location>
        <begin position="558"/>
        <end position="596"/>
    </location>
</feature>
<feature type="compositionally biased region" description="Low complexity" evidence="3">
    <location>
        <begin position="349"/>
        <end position="391"/>
    </location>
</feature>
<feature type="compositionally biased region" description="Polar residues" evidence="3">
    <location>
        <begin position="511"/>
        <end position="520"/>
    </location>
</feature>
<feature type="compositionally biased region" description="Acidic residues" evidence="3">
    <location>
        <begin position="527"/>
        <end position="536"/>
    </location>
</feature>